<protein>
    <recommendedName>
        <fullName evidence="1">Dihydroxy-acid dehydratase</fullName>
        <shortName evidence="1">DAD</shortName>
        <ecNumber evidence="1">4.2.1.9</ecNumber>
    </recommendedName>
</protein>
<organism>
    <name type="scientific">Buchnera aphidicola subsp. Baizongia pistaciae (strain Bp)</name>
    <dbReference type="NCBI Taxonomy" id="224915"/>
    <lineage>
        <taxon>Bacteria</taxon>
        <taxon>Pseudomonadati</taxon>
        <taxon>Pseudomonadota</taxon>
        <taxon>Gammaproteobacteria</taxon>
        <taxon>Enterobacterales</taxon>
        <taxon>Erwiniaceae</taxon>
        <taxon>Buchnera</taxon>
    </lineage>
</organism>
<proteinExistence type="inferred from homology"/>
<dbReference type="EC" id="4.2.1.9" evidence="1"/>
<dbReference type="EMBL" id="AE016826">
    <property type="protein sequence ID" value="AAO27241.1"/>
    <property type="molecule type" value="Genomic_DNA"/>
</dbReference>
<dbReference type="RefSeq" id="WP_011091642.1">
    <property type="nucleotide sequence ID" value="NC_004545.1"/>
</dbReference>
<dbReference type="SMR" id="P59426"/>
<dbReference type="STRING" id="224915.bbp_542"/>
<dbReference type="KEGG" id="bab:bbp_542"/>
<dbReference type="eggNOG" id="COG0129">
    <property type="taxonomic scope" value="Bacteria"/>
</dbReference>
<dbReference type="HOGENOM" id="CLU_014271_4_2_6"/>
<dbReference type="OrthoDB" id="9807077at2"/>
<dbReference type="UniPathway" id="UPA00047">
    <property type="reaction ID" value="UER00057"/>
</dbReference>
<dbReference type="UniPathway" id="UPA00049">
    <property type="reaction ID" value="UER00061"/>
</dbReference>
<dbReference type="Proteomes" id="UP000000601">
    <property type="component" value="Chromosome"/>
</dbReference>
<dbReference type="GO" id="GO:0005829">
    <property type="term" value="C:cytosol"/>
    <property type="evidence" value="ECO:0007669"/>
    <property type="project" value="TreeGrafter"/>
</dbReference>
<dbReference type="GO" id="GO:0051537">
    <property type="term" value="F:2 iron, 2 sulfur cluster binding"/>
    <property type="evidence" value="ECO:0007669"/>
    <property type="project" value="UniProtKB-UniRule"/>
</dbReference>
<dbReference type="GO" id="GO:0004160">
    <property type="term" value="F:dihydroxy-acid dehydratase activity"/>
    <property type="evidence" value="ECO:0007669"/>
    <property type="project" value="UniProtKB-UniRule"/>
</dbReference>
<dbReference type="GO" id="GO:0000287">
    <property type="term" value="F:magnesium ion binding"/>
    <property type="evidence" value="ECO:0007669"/>
    <property type="project" value="UniProtKB-UniRule"/>
</dbReference>
<dbReference type="GO" id="GO:0009097">
    <property type="term" value="P:isoleucine biosynthetic process"/>
    <property type="evidence" value="ECO:0007669"/>
    <property type="project" value="UniProtKB-UniRule"/>
</dbReference>
<dbReference type="GO" id="GO:0009099">
    <property type="term" value="P:L-valine biosynthetic process"/>
    <property type="evidence" value="ECO:0007669"/>
    <property type="project" value="UniProtKB-UniRule"/>
</dbReference>
<dbReference type="FunFam" id="3.50.30.80:FF:000001">
    <property type="entry name" value="Dihydroxy-acid dehydratase"/>
    <property type="match status" value="1"/>
</dbReference>
<dbReference type="Gene3D" id="3.50.30.80">
    <property type="entry name" value="IlvD/EDD C-terminal domain-like"/>
    <property type="match status" value="1"/>
</dbReference>
<dbReference type="HAMAP" id="MF_00012">
    <property type="entry name" value="IlvD"/>
    <property type="match status" value="1"/>
</dbReference>
<dbReference type="InterPro" id="IPR042096">
    <property type="entry name" value="Dihydro-acid_dehy_C"/>
</dbReference>
<dbReference type="InterPro" id="IPR004404">
    <property type="entry name" value="DihydroxyA_deHydtase"/>
</dbReference>
<dbReference type="InterPro" id="IPR020558">
    <property type="entry name" value="DiOHA_6PGluconate_deHydtase_CS"/>
</dbReference>
<dbReference type="InterPro" id="IPR056740">
    <property type="entry name" value="ILV_EDD_C"/>
</dbReference>
<dbReference type="InterPro" id="IPR000581">
    <property type="entry name" value="ILV_EDD_N"/>
</dbReference>
<dbReference type="InterPro" id="IPR037237">
    <property type="entry name" value="IlvD/EDD_N"/>
</dbReference>
<dbReference type="NCBIfam" id="TIGR00110">
    <property type="entry name" value="ilvD"/>
    <property type="match status" value="1"/>
</dbReference>
<dbReference type="NCBIfam" id="NF009103">
    <property type="entry name" value="PRK12448.1"/>
    <property type="match status" value="1"/>
</dbReference>
<dbReference type="PANTHER" id="PTHR43661">
    <property type="entry name" value="D-XYLONATE DEHYDRATASE"/>
    <property type="match status" value="1"/>
</dbReference>
<dbReference type="PANTHER" id="PTHR43661:SF3">
    <property type="entry name" value="D-XYLONATE DEHYDRATASE YAGF-RELATED"/>
    <property type="match status" value="1"/>
</dbReference>
<dbReference type="Pfam" id="PF24877">
    <property type="entry name" value="ILV_EDD_C"/>
    <property type="match status" value="1"/>
</dbReference>
<dbReference type="Pfam" id="PF00920">
    <property type="entry name" value="ILVD_EDD_N"/>
    <property type="match status" value="1"/>
</dbReference>
<dbReference type="SUPFAM" id="SSF143975">
    <property type="entry name" value="IlvD/EDD N-terminal domain-like"/>
    <property type="match status" value="1"/>
</dbReference>
<dbReference type="SUPFAM" id="SSF52016">
    <property type="entry name" value="LeuD/IlvD-like"/>
    <property type="match status" value="1"/>
</dbReference>
<dbReference type="PROSITE" id="PS00886">
    <property type="entry name" value="ILVD_EDD_1"/>
    <property type="match status" value="1"/>
</dbReference>
<dbReference type="PROSITE" id="PS00887">
    <property type="entry name" value="ILVD_EDD_2"/>
    <property type="match status" value="1"/>
</dbReference>
<keyword id="KW-0001">2Fe-2S</keyword>
<keyword id="KW-0028">Amino-acid biosynthesis</keyword>
<keyword id="KW-0100">Branched-chain amino acid biosynthesis</keyword>
<keyword id="KW-0408">Iron</keyword>
<keyword id="KW-0411">Iron-sulfur</keyword>
<keyword id="KW-0456">Lyase</keyword>
<keyword id="KW-0460">Magnesium</keyword>
<keyword id="KW-0479">Metal-binding</keyword>
<keyword id="KW-1185">Reference proteome</keyword>
<reference key="1">
    <citation type="journal article" date="2003" name="Proc. Natl. Acad. Sci. U.S.A.">
        <title>Reductive genome evolution in Buchnera aphidicola.</title>
        <authorList>
            <person name="van Ham R.C.H.J."/>
            <person name="Kamerbeek J."/>
            <person name="Palacios C."/>
            <person name="Rausell C."/>
            <person name="Abascal F."/>
            <person name="Bastolla U."/>
            <person name="Fernandez J.M."/>
            <person name="Jimenez L."/>
            <person name="Postigo M."/>
            <person name="Silva F.J."/>
            <person name="Tamames J."/>
            <person name="Viguera E."/>
            <person name="Latorre A."/>
            <person name="Valencia A."/>
            <person name="Moran F."/>
            <person name="Moya A."/>
        </authorList>
    </citation>
    <scope>NUCLEOTIDE SEQUENCE [LARGE SCALE GENOMIC DNA]</scope>
    <source>
        <strain>Bp</strain>
    </source>
</reference>
<feature type="chain" id="PRO_0000103448" description="Dihydroxy-acid dehydratase">
    <location>
        <begin position="1"/>
        <end position="612"/>
    </location>
</feature>
<feature type="active site" description="Proton acceptor" evidence="1">
    <location>
        <position position="517"/>
    </location>
</feature>
<feature type="binding site" evidence="1">
    <location>
        <position position="81"/>
    </location>
    <ligand>
        <name>Mg(2+)</name>
        <dbReference type="ChEBI" id="CHEBI:18420"/>
    </ligand>
</feature>
<feature type="binding site" evidence="1">
    <location>
        <position position="122"/>
    </location>
    <ligand>
        <name>[2Fe-2S] cluster</name>
        <dbReference type="ChEBI" id="CHEBI:190135"/>
    </ligand>
</feature>
<feature type="binding site" evidence="1">
    <location>
        <position position="123"/>
    </location>
    <ligand>
        <name>Mg(2+)</name>
        <dbReference type="ChEBI" id="CHEBI:18420"/>
    </ligand>
</feature>
<feature type="binding site" description="via carbamate group" evidence="1">
    <location>
        <position position="124"/>
    </location>
    <ligand>
        <name>Mg(2+)</name>
        <dbReference type="ChEBI" id="CHEBI:18420"/>
    </ligand>
</feature>
<feature type="binding site" evidence="1">
    <location>
        <position position="195"/>
    </location>
    <ligand>
        <name>[2Fe-2S] cluster</name>
        <dbReference type="ChEBI" id="CHEBI:190135"/>
    </ligand>
</feature>
<feature type="binding site" evidence="1">
    <location>
        <position position="491"/>
    </location>
    <ligand>
        <name>Mg(2+)</name>
        <dbReference type="ChEBI" id="CHEBI:18420"/>
    </ligand>
</feature>
<feature type="modified residue" description="N6-carboxylysine" evidence="1">
    <location>
        <position position="124"/>
    </location>
</feature>
<gene>
    <name evidence="1" type="primary">ilvD</name>
    <name type="ordered locus">bbp_542</name>
</gene>
<evidence type="ECO:0000255" key="1">
    <source>
        <dbReference type="HAMAP-Rule" id="MF_00012"/>
    </source>
</evidence>
<comment type="function">
    <text evidence="1">Functions in the biosynthesis of branched-chain amino acids. Catalyzes the dehydration of (2R,3R)-2,3-dihydroxy-3-methylpentanoate (2,3-dihydroxy-3-methylvalerate) into 2-oxo-3-methylpentanoate (2-oxo-3-methylvalerate) and of (2R)-2,3-dihydroxy-3-methylbutanoate (2,3-dihydroxyisovalerate) into 2-oxo-3-methylbutanoate (2-oxoisovalerate), the penultimate precursor to L-isoleucine and L-valine, respectively.</text>
</comment>
<comment type="catalytic activity">
    <reaction evidence="1">
        <text>(2R)-2,3-dihydroxy-3-methylbutanoate = 3-methyl-2-oxobutanoate + H2O</text>
        <dbReference type="Rhea" id="RHEA:24809"/>
        <dbReference type="ChEBI" id="CHEBI:11851"/>
        <dbReference type="ChEBI" id="CHEBI:15377"/>
        <dbReference type="ChEBI" id="CHEBI:49072"/>
        <dbReference type="EC" id="4.2.1.9"/>
    </reaction>
    <physiologicalReaction direction="left-to-right" evidence="1">
        <dbReference type="Rhea" id="RHEA:24810"/>
    </physiologicalReaction>
</comment>
<comment type="catalytic activity">
    <reaction evidence="1">
        <text>(2R,3R)-2,3-dihydroxy-3-methylpentanoate = (S)-3-methyl-2-oxopentanoate + H2O</text>
        <dbReference type="Rhea" id="RHEA:27694"/>
        <dbReference type="ChEBI" id="CHEBI:15377"/>
        <dbReference type="ChEBI" id="CHEBI:35146"/>
        <dbReference type="ChEBI" id="CHEBI:49258"/>
        <dbReference type="EC" id="4.2.1.9"/>
    </reaction>
    <physiologicalReaction direction="left-to-right" evidence="1">
        <dbReference type="Rhea" id="RHEA:27695"/>
    </physiologicalReaction>
</comment>
<comment type="cofactor">
    <cofactor evidence="1">
        <name>[2Fe-2S] cluster</name>
        <dbReference type="ChEBI" id="CHEBI:190135"/>
    </cofactor>
    <text evidence="1">Binds 1 [2Fe-2S] cluster per subunit. This cluster acts as a Lewis acid cofactor.</text>
</comment>
<comment type="cofactor">
    <cofactor evidence="1">
        <name>Mg(2+)</name>
        <dbReference type="ChEBI" id="CHEBI:18420"/>
    </cofactor>
</comment>
<comment type="pathway">
    <text evidence="1">Amino-acid biosynthesis; L-isoleucine biosynthesis; L-isoleucine from 2-oxobutanoate: step 3/4.</text>
</comment>
<comment type="pathway">
    <text evidence="1">Amino-acid biosynthesis; L-valine biosynthesis; L-valine from pyruvate: step 3/4.</text>
</comment>
<comment type="subunit">
    <text evidence="1">Homodimer.</text>
</comment>
<comment type="similarity">
    <text evidence="1">Belongs to the IlvD/Edd family.</text>
</comment>
<accession>P59426</accession>
<name>ILVD_BUCBP</name>
<sequence length="612" mass="66843">MPKYRSSTTTQGPNMSGARALWRATGMSSDDFNKPIIAVVNSFTEFVPGHIHLRELGQLVSQYIISSGGVSKEFNTIAIDDGIAMGHSGMLYSLPSRDLIADSVEFMINAHCVDAMVCISNCDKITPGMLMAALRLNIPCVFVSGGPMESGKIVISDKEIKLNLVDAITCGVNPDSSDDMINEIEKSACPTCGSCSGMFTANSMNCLMEAIGLSLPGNGTILATHIDRKKLFVQAGKLIVKITQEYYKNNNEKFLPRNVATKEAFCNAMALDIAMGGSTNTVLHLLAAAREGCVDFTMLDVDLLSRKIPNLCKLSPNTTFYHIEDFHRAGGVFGVLDELNKVNLLYKQTFNILGLNLEEMLSKYSILTGNDKNIIKMFYAAPSGQKTIKPFSQSCRWNSLDIDRKLGCIRDYNSAFSLDGGIAVLYGNLAKDGCIVKTAGVHEKNLIFRGKAVVYESQDEAVHAILNNKIVKGNVIIIRYEGPKGGPGMQEMLYPTSYLKSMKLDQDCALITDGRFSGGTSGLSIGHISPEAANQGIIALVRTGDFIDINIPNRKIHLDITDNELLLRIKNEKDRGIDAYTPSHRKRIVTSALKLYSKFVTSADKGAVRNIR</sequence>